<dbReference type="EC" id="3.6.1.-" evidence="1 2"/>
<dbReference type="EMBL" id="U00096">
    <property type="protein sequence ID" value="AAC74035.1"/>
    <property type="molecule type" value="Genomic_DNA"/>
</dbReference>
<dbReference type="EMBL" id="AP009048">
    <property type="protein sequence ID" value="BAA35707.1"/>
    <property type="molecule type" value="Genomic_DNA"/>
</dbReference>
<dbReference type="EMBL" id="Y09439">
    <property type="protein sequence ID" value="CAA70589.1"/>
    <property type="molecule type" value="Genomic_DNA"/>
</dbReference>
<dbReference type="EMBL" id="X81561">
    <property type="status" value="NOT_ANNOTATED_CDS"/>
    <property type="molecule type" value="Genomic_DNA"/>
</dbReference>
<dbReference type="PIR" id="D64835">
    <property type="entry name" value="D64835"/>
</dbReference>
<dbReference type="RefSeq" id="NP_415469.1">
    <property type="nucleotide sequence ID" value="NC_000913.3"/>
</dbReference>
<dbReference type="RefSeq" id="WP_000053099.1">
    <property type="nucleotide sequence ID" value="NZ_SSZK01000002.1"/>
</dbReference>
<dbReference type="PDB" id="2LW1">
    <property type="method" value="NMR"/>
    <property type="chains" value="A=528-635"/>
</dbReference>
<dbReference type="PDBsum" id="2LW1"/>
<dbReference type="BMRB" id="P43672"/>
<dbReference type="SMR" id="P43672"/>
<dbReference type="BioGRID" id="4260026">
    <property type="interactions" value="28"/>
</dbReference>
<dbReference type="DIP" id="DIP-11099N"/>
<dbReference type="FunCoup" id="P43672">
    <property type="interactions" value="439"/>
</dbReference>
<dbReference type="IntAct" id="P43672">
    <property type="interactions" value="13"/>
</dbReference>
<dbReference type="STRING" id="511145.b0949"/>
<dbReference type="TCDB" id="3.A.1.120.6">
    <property type="family name" value="the atp-binding cassette (abc) superfamily"/>
</dbReference>
<dbReference type="jPOST" id="P43672"/>
<dbReference type="PaxDb" id="511145-b0949"/>
<dbReference type="EnsemblBacteria" id="AAC74035">
    <property type="protein sequence ID" value="AAC74035"/>
    <property type="gene ID" value="b0949"/>
</dbReference>
<dbReference type="GeneID" id="945566"/>
<dbReference type="KEGG" id="ecj:JW0932"/>
<dbReference type="KEGG" id="eco:b0949"/>
<dbReference type="KEGG" id="ecoc:C3026_05810"/>
<dbReference type="PATRIC" id="fig|1411691.4.peg.1325"/>
<dbReference type="EchoBASE" id="EB2933"/>
<dbReference type="eggNOG" id="COG0488">
    <property type="taxonomic scope" value="Bacteria"/>
</dbReference>
<dbReference type="HOGENOM" id="CLU_000604_36_0_6"/>
<dbReference type="InParanoid" id="P43672"/>
<dbReference type="OMA" id="QWTPVGD"/>
<dbReference type="OrthoDB" id="9762051at2"/>
<dbReference type="PhylomeDB" id="P43672"/>
<dbReference type="BioCyc" id="EcoCyc:UUP-MONOMER"/>
<dbReference type="EvolutionaryTrace" id="P43672"/>
<dbReference type="PRO" id="PR:P43672"/>
<dbReference type="Proteomes" id="UP000000625">
    <property type="component" value="Chromosome"/>
</dbReference>
<dbReference type="GO" id="GO:0005737">
    <property type="term" value="C:cytoplasm"/>
    <property type="evidence" value="ECO:0000314"/>
    <property type="project" value="EcoCyc"/>
</dbReference>
<dbReference type="GO" id="GO:0005886">
    <property type="term" value="C:plasma membrane"/>
    <property type="evidence" value="ECO:0000314"/>
    <property type="project" value="EcoCyc"/>
</dbReference>
<dbReference type="GO" id="GO:0005524">
    <property type="term" value="F:ATP binding"/>
    <property type="evidence" value="ECO:0007669"/>
    <property type="project" value="UniProtKB-UniRule"/>
</dbReference>
<dbReference type="GO" id="GO:0016887">
    <property type="term" value="F:ATP hydrolysis activity"/>
    <property type="evidence" value="ECO:0000314"/>
    <property type="project" value="EcoCyc"/>
</dbReference>
<dbReference type="GO" id="GO:0003677">
    <property type="term" value="F:DNA binding"/>
    <property type="evidence" value="ECO:0000314"/>
    <property type="project" value="EcoCyc"/>
</dbReference>
<dbReference type="GO" id="GO:0043022">
    <property type="term" value="F:ribosome binding"/>
    <property type="evidence" value="ECO:0007669"/>
    <property type="project" value="UniProtKB-UniRule"/>
</dbReference>
<dbReference type="GO" id="GO:0006301">
    <property type="term" value="P:postreplication repair"/>
    <property type="evidence" value="ECO:0000315"/>
    <property type="project" value="EcoCyc"/>
</dbReference>
<dbReference type="GO" id="GO:0009314">
    <property type="term" value="P:response to radiation"/>
    <property type="evidence" value="ECO:0000315"/>
    <property type="project" value="EcoCyc"/>
</dbReference>
<dbReference type="CDD" id="cd03221">
    <property type="entry name" value="ABCF_EF-3"/>
    <property type="match status" value="2"/>
</dbReference>
<dbReference type="FunFam" id="3.40.50.300:FF:000309">
    <property type="entry name" value="ABC transporter ATP-binding protein"/>
    <property type="match status" value="1"/>
</dbReference>
<dbReference type="FunFam" id="1.10.287.380:FF:000003">
    <property type="entry name" value="ABC transporter ATP-binding protein uup"/>
    <property type="match status" value="1"/>
</dbReference>
<dbReference type="FunFam" id="3.40.50.300:FF:000011">
    <property type="entry name" value="Putative ABC transporter ATP-binding component"/>
    <property type="match status" value="1"/>
</dbReference>
<dbReference type="Gene3D" id="3.40.50.300">
    <property type="entry name" value="P-loop containing nucleotide triphosphate hydrolases"/>
    <property type="match status" value="2"/>
</dbReference>
<dbReference type="Gene3D" id="1.10.287.380">
    <property type="entry name" value="Valyl-tRNA synthetase, C-terminal domain"/>
    <property type="match status" value="1"/>
</dbReference>
<dbReference type="HAMAP" id="MF_00848">
    <property type="entry name" value="Uup"/>
    <property type="match status" value="1"/>
</dbReference>
<dbReference type="InterPro" id="IPR003593">
    <property type="entry name" value="AAA+_ATPase"/>
</dbReference>
<dbReference type="InterPro" id="IPR032524">
    <property type="entry name" value="ABC_tran_C"/>
</dbReference>
<dbReference type="InterPro" id="IPR032781">
    <property type="entry name" value="ABC_tran_Xtn"/>
</dbReference>
<dbReference type="InterPro" id="IPR003439">
    <property type="entry name" value="ABC_transporter-like_ATP-bd"/>
</dbReference>
<dbReference type="InterPro" id="IPR017871">
    <property type="entry name" value="ABC_transporter-like_CS"/>
</dbReference>
<dbReference type="InterPro" id="IPR051309">
    <property type="entry name" value="ABCF_ATPase"/>
</dbReference>
<dbReference type="InterPro" id="IPR027417">
    <property type="entry name" value="P-loop_NTPase"/>
</dbReference>
<dbReference type="InterPro" id="IPR043686">
    <property type="entry name" value="Uup"/>
</dbReference>
<dbReference type="InterPro" id="IPR037118">
    <property type="entry name" value="Val-tRNA_synth_C_sf"/>
</dbReference>
<dbReference type="NCBIfam" id="NF008358">
    <property type="entry name" value="PRK11147.1"/>
    <property type="match status" value="1"/>
</dbReference>
<dbReference type="PANTHER" id="PTHR42855">
    <property type="entry name" value="ABC TRANSPORTER ATP-BINDING SUBUNIT"/>
    <property type="match status" value="1"/>
</dbReference>
<dbReference type="PANTHER" id="PTHR42855:SF1">
    <property type="entry name" value="ABC TRANSPORTER DOMAIN-CONTAINING PROTEIN"/>
    <property type="match status" value="1"/>
</dbReference>
<dbReference type="Pfam" id="PF00005">
    <property type="entry name" value="ABC_tran"/>
    <property type="match status" value="2"/>
</dbReference>
<dbReference type="Pfam" id="PF16326">
    <property type="entry name" value="ABC_tran_CTD"/>
    <property type="match status" value="1"/>
</dbReference>
<dbReference type="Pfam" id="PF12848">
    <property type="entry name" value="ABC_tran_Xtn"/>
    <property type="match status" value="1"/>
</dbReference>
<dbReference type="SMART" id="SM00382">
    <property type="entry name" value="AAA"/>
    <property type="match status" value="2"/>
</dbReference>
<dbReference type="SUPFAM" id="SSF52540">
    <property type="entry name" value="P-loop containing nucleoside triphosphate hydrolases"/>
    <property type="match status" value="2"/>
</dbReference>
<dbReference type="PROSITE" id="PS00211">
    <property type="entry name" value="ABC_TRANSPORTER_1"/>
    <property type="match status" value="2"/>
</dbReference>
<dbReference type="PROSITE" id="PS50893">
    <property type="entry name" value="ABC_TRANSPORTER_2"/>
    <property type="match status" value="2"/>
</dbReference>
<keyword id="KW-0002">3D-structure</keyword>
<keyword id="KW-0067">ATP-binding</keyword>
<keyword id="KW-0175">Coiled coil</keyword>
<keyword id="KW-0963">Cytoplasm</keyword>
<keyword id="KW-0903">Direct protein sequencing</keyword>
<keyword id="KW-0227">DNA damage</keyword>
<keyword id="KW-0234">DNA repair</keyword>
<keyword id="KW-0238">DNA-binding</keyword>
<keyword id="KW-0378">Hydrolase</keyword>
<keyword id="KW-0547">Nucleotide-binding</keyword>
<keyword id="KW-1185">Reference proteome</keyword>
<keyword id="KW-0677">Repeat</keyword>
<protein>
    <recommendedName>
        <fullName evidence="1">ATP-binding protein Uup</fullName>
        <ecNumber evidence="1 2">3.6.1.-</ecNumber>
    </recommendedName>
</protein>
<gene>
    <name evidence="1 12" type="primary">uup</name>
    <name type="synonym">ycbH</name>
    <name type="synonym">ycbI</name>
    <name type="ordered locus">b0949</name>
    <name type="ordered locus">JW0932</name>
</gene>
<comment type="function">
    <text evidence="2 3 6 8 10 14">Probably plays a role in ribosome assembly or function; overexpression suppresses cold-sensitive growth of a bipA deletion (Probable) (Ref.10). May be involved in resolution of branched DNA intermediates that result from template switching in postreplication gaps. Binds DNA at Holliday junctions. May be involved in the correct segregation of nucleoids (PubMed:31665437). Has ATPase activity, binds DNA non-sequence specifically; the presence of DNA does not change the ATPase activity (PubMed:16407313). Mutations in this gene cause an increase in RecA-independent precise excision of transposons and insertion elements, and also reduce bacteriophage Mu growth (PubMed:16407313, PubMed:19948254, PubMed:6294054). Genetic interactions among priB, dam, lexA, nagC, polA, rdgB, rdgB, rep and uup link the PriA-PriB replication restart pathway to DNA double-strand break repair (PubMed:36326440).</text>
</comment>
<comment type="catalytic activity">
    <reaction evidence="1 2">
        <text>ATP + H2O = ADP + phosphate + H(+)</text>
        <dbReference type="Rhea" id="RHEA:13065"/>
        <dbReference type="ChEBI" id="CHEBI:15377"/>
        <dbReference type="ChEBI" id="CHEBI:15378"/>
        <dbReference type="ChEBI" id="CHEBI:30616"/>
        <dbReference type="ChEBI" id="CHEBI:43474"/>
        <dbReference type="ChEBI" id="CHEBI:456216"/>
    </reaction>
</comment>
<comment type="activity regulation">
    <text evidence="2">ATPase activity inhibited by N-ethylmaleimide but not by vanadate.</text>
</comment>
<comment type="biophysicochemical properties">
    <kinetics>
        <KM evidence="2">1.35 mM for ATP</KM>
        <Vmax evidence="2">26.0 nmol/min/mg enzyme</Vmax>
    </kinetics>
</comment>
<comment type="interaction">
    <interactant intactId="EBI-559429">
        <id>P43672</id>
    </interactant>
    <interactant intactId="EBI-552719">
        <id>P0A8N3</id>
        <label>lysS</label>
    </interactant>
    <organismsDiffer>false</organismsDiffer>
    <experiments>2</experiments>
</comment>
<comment type="subcellular location">
    <subcellularLocation>
        <location evidence="1 2 10">Cytoplasm</location>
    </subcellularLocation>
    <text evidence="1 10">Associates with ribosomes.</text>
</comment>
<comment type="induction">
    <text evidence="2 10">Present from early exponential to stationary phase in equal amounts (at protein level).</text>
</comment>
<comment type="domain">
    <text evidence="3">The C-terminal domain (CTD) helps bind DNA, is required to complement a gene deletion.</text>
</comment>
<comment type="disruption phenotype">
    <text evidence="2 3 6 7 9 10">Increase in the frequency of precise transposon excision (PubMed:16407313, PubMed:19948254, PubMed:9139905). No visible growth phenotype at 37 or 18 degrees Celsius. A double bipA-uup deletion does not grow at 18 degrees Celsius, i.e. the uup deletion exacerbates the bipA deletion (Ref.10). Deletion leads to an increase in DNA crossing over, DNA repeat deletion and DNA repeat expansion; double uup-radD deletion increases the phenotypes. Although single uup deleted cells replicate normally, they are filamentous and lack defined nucleoids, again exacerbated by a radD deletion (PubMed:31665437). A double deletion with priB is disadvantageous to cells (PubMed:36326440).</text>
</comment>
<comment type="similarity">
    <text evidence="1 11">Belongs to the ABC transporter superfamily. ABCF family. Uup subfamily.</text>
</comment>
<comment type="sequence caution" evidence="13">
    <conflict type="frameshift">
        <sequence resource="EMBL" id="X81561"/>
    </conflict>
</comment>
<proteinExistence type="evidence at protein level"/>
<sequence>MSLISMHGAWLSFSDAPLLDNAELHIEDNERVCLVGRNGAGKSTLMKILNREQGLDDGRIIYEQDLIVARLQQDPPRNVEGSVYDFVAEGIEEQAEYLKRYHDISRLVMNDPSEKNLNELAKVQEQLDHHNLWQLENRINEVLAQLGLDPNVALSSLSGGWLRKAALGRALVSNPRVLLLDEPTNHLDIETIDWLEGFLKTFNGTIIFISHDRSFIRNMATRIVDLDRGKLVTYPGNYDQYLLEKEEALRVEELQNAEFDRKLAQEEVWIRQGIKARRTRNEGRVRALKAMRRERGERREVMGTAKMQVEEASRSGKIVFEMEDVCYQVNGKQLVKDFSAQVLRGDKIALIGPNGCGKTTLLKLMLGQLQADSGRIHVGTKLEVAYFDQHRAELDPDKTVMDNLAEGKQEVMVNGKPRHVLGYLQDFLFHPKRAMTPVRALSGGERNRLLLARLFLKPSNLLILDEPTNDLDVETLELLEELIDSYQGTVLLVSHDRQFVDNTVTECWIFEGGGKIGRYVGGYHDARGQQEQYVALKQPAVKKTEEAAAAKAETVKRSSSKLSYKLQRELEQLPQLLEDLEAKLEALQTQVADASFFSQPHEQTQKVLADMAAAEQELEQAFERWEYLEALKNGG</sequence>
<accession>P43672</accession>
<accession>O05662</accession>
<accession>P43673</accession>
<accession>P75865</accession>
<evidence type="ECO:0000255" key="1">
    <source>
        <dbReference type="HAMAP-Rule" id="MF_00848"/>
    </source>
</evidence>
<evidence type="ECO:0000269" key="2">
    <source>
    </source>
</evidence>
<evidence type="ECO:0000269" key="3">
    <source>
    </source>
</evidence>
<evidence type="ECO:0000269" key="4">
    <source>
    </source>
</evidence>
<evidence type="ECO:0000269" key="5">
    <source>
    </source>
</evidence>
<evidence type="ECO:0000269" key="6">
    <source>
    </source>
</evidence>
<evidence type="ECO:0000269" key="7">
    <source>
    </source>
</evidence>
<evidence type="ECO:0000269" key="8">
    <source>
    </source>
</evidence>
<evidence type="ECO:0000269" key="9">
    <source>
    </source>
</evidence>
<evidence type="ECO:0000269" key="10">
    <source ref="10"/>
</evidence>
<evidence type="ECO:0000303" key="11">
    <source>
    </source>
</evidence>
<evidence type="ECO:0000303" key="12">
    <source>
    </source>
</evidence>
<evidence type="ECO:0000305" key="13"/>
<evidence type="ECO:0000305" key="14">
    <source>
    </source>
</evidence>
<evidence type="ECO:0007744" key="15">
    <source>
        <dbReference type="PDB" id="2LW1"/>
    </source>
</evidence>
<evidence type="ECO:0007829" key="16">
    <source>
        <dbReference type="PDB" id="2LW1"/>
    </source>
</evidence>
<organism>
    <name type="scientific">Escherichia coli (strain K12)</name>
    <dbReference type="NCBI Taxonomy" id="83333"/>
    <lineage>
        <taxon>Bacteria</taxon>
        <taxon>Pseudomonadati</taxon>
        <taxon>Pseudomonadota</taxon>
        <taxon>Gammaproteobacteria</taxon>
        <taxon>Enterobacterales</taxon>
        <taxon>Enterobacteriaceae</taxon>
        <taxon>Escherichia</taxon>
    </lineage>
</organism>
<reference key="1">
    <citation type="journal article" date="1996" name="DNA Res.">
        <title>A 718-kb DNA sequence of the Escherichia coli K-12 genome corresponding to the 12.7-28.0 min region on the linkage map.</title>
        <authorList>
            <person name="Oshima T."/>
            <person name="Aiba H."/>
            <person name="Baba T."/>
            <person name="Fujita K."/>
            <person name="Hayashi K."/>
            <person name="Honjo A."/>
            <person name="Ikemoto K."/>
            <person name="Inada T."/>
            <person name="Itoh T."/>
            <person name="Kajihara M."/>
            <person name="Kanai K."/>
            <person name="Kashimoto K."/>
            <person name="Kimura S."/>
            <person name="Kitagawa M."/>
            <person name="Makino K."/>
            <person name="Masuda S."/>
            <person name="Miki T."/>
            <person name="Mizobuchi K."/>
            <person name="Mori H."/>
            <person name="Motomura K."/>
            <person name="Nakamura Y."/>
            <person name="Nashimoto H."/>
            <person name="Nishio Y."/>
            <person name="Saito N."/>
            <person name="Sampei G."/>
            <person name="Seki Y."/>
            <person name="Tagami H."/>
            <person name="Takemoto K."/>
            <person name="Wada C."/>
            <person name="Yamamoto Y."/>
            <person name="Yano M."/>
            <person name="Horiuchi T."/>
        </authorList>
    </citation>
    <scope>NUCLEOTIDE SEQUENCE [LARGE SCALE GENOMIC DNA]</scope>
    <source>
        <strain>K12 / W3110 / ATCC 27325 / DSM 5911</strain>
    </source>
</reference>
<reference key="2">
    <citation type="journal article" date="1997" name="Science">
        <title>The complete genome sequence of Escherichia coli K-12.</title>
        <authorList>
            <person name="Blattner F.R."/>
            <person name="Plunkett G. III"/>
            <person name="Bloch C.A."/>
            <person name="Perna N.T."/>
            <person name="Burland V."/>
            <person name="Riley M."/>
            <person name="Collado-Vides J."/>
            <person name="Glasner J.D."/>
            <person name="Rode C.K."/>
            <person name="Mayhew G.F."/>
            <person name="Gregor J."/>
            <person name="Davis N.W."/>
            <person name="Kirkpatrick H.A."/>
            <person name="Goeden M.A."/>
            <person name="Rose D.J."/>
            <person name="Mau B."/>
            <person name="Shao Y."/>
        </authorList>
    </citation>
    <scope>NUCLEOTIDE SEQUENCE [LARGE SCALE GENOMIC DNA]</scope>
    <source>
        <strain>K12 / MG1655 / ATCC 47076</strain>
    </source>
</reference>
<reference key="3">
    <citation type="journal article" date="2006" name="Mol. Syst. Biol.">
        <title>Highly accurate genome sequences of Escherichia coli K-12 strains MG1655 and W3110.</title>
        <authorList>
            <person name="Hayashi K."/>
            <person name="Morooka N."/>
            <person name="Yamamoto Y."/>
            <person name="Fujita K."/>
            <person name="Isono K."/>
            <person name="Choi S."/>
            <person name="Ohtsubo E."/>
            <person name="Baba T."/>
            <person name="Wanner B.L."/>
            <person name="Mori H."/>
            <person name="Horiuchi T."/>
        </authorList>
    </citation>
    <scope>NUCLEOTIDE SEQUENCE [LARGE SCALE GENOMIC DNA]</scope>
    <source>
        <strain>K12 / W3110 / ATCC 27325 / DSM 5911</strain>
    </source>
</reference>
<reference key="4">
    <citation type="journal article" date="1997" name="J. Bacteriol.">
        <title>Identification and characterization of ssb and uup mutants with increased frequency of precise excision of transposon Tn10 derivatives: nucleotide sequence of uup in Escherichia coli.</title>
        <authorList>
            <person name="Reddy M."/>
            <person name="Gowrishankar J."/>
        </authorList>
    </citation>
    <scope>NUCLEOTIDE SEQUENCE [GENOMIC DNA] OF 1-614</scope>
    <scope>DISRUPTION PHENOTYPE</scope>
    <source>
        <strain>K12 / W3110 / ATCC 27325 / DSM 5911</strain>
    </source>
</reference>
<reference key="5">
    <citation type="journal article" date="2006" name="J. Biol. Chem.">
        <title>ATP hydrolysis is essential for the function of the Uup ATP-binding cassette ATPase in precise excision of transposons.</title>
        <authorList>
            <person name="Murat D."/>
            <person name="Bance P."/>
            <person name="Callebaut I."/>
            <person name="Dassa E."/>
        </authorList>
    </citation>
    <scope>PROTEIN SEQUENCE OF 315-320</scope>
    <scope>ATPASE ACTIVITY</scope>
    <scope>CATALYTIC ACTIVITY</scope>
    <scope>BIOPHYSICOCHEMICAL PROPERTIES</scope>
    <scope>SUBCELLULAR LOCATION</scope>
    <scope>INDUCTION</scope>
    <scope>DISRUPTION PHENOTYPE</scope>
    <scope>DNA-BINDING</scope>
    <scope>MUTAGENESIS OF ASP-181; ASP-465 AND 551-LYS--GLY-635</scope>
    <source>
        <strain>K12 / MG1655 / ATCC 47076</strain>
    </source>
</reference>
<reference key="6">
    <citation type="journal article" date="1995" name="J. Bacteriol.">
        <title>Isolation of a novel paraquat-inducible (pqi) gene regulated by the soxRS locus in Escherichia coli.</title>
        <authorList>
            <person name="Koh Y.-S."/>
            <person name="Roe J.-H."/>
        </authorList>
    </citation>
    <scope>NUCLEOTIDE SEQUENCE [GENOMIC DNA] OF 395-635</scope>
    <source>
        <strain>K12 / W3110 / ATCC 27325 / DSM 5911</strain>
    </source>
</reference>
<reference key="7">
    <citation type="journal article" date="1983" name="J. Bacteriol.">
        <title>New class of mutations in Escherichia coli (uup) that affect precise excision of insertion elements and bacteriophage Mu growth.</title>
        <authorList>
            <person name="Hopkins J.D."/>
            <person name="Clements M."/>
            <person name="Syvanen M."/>
        </authorList>
    </citation>
    <scope>FUNCTION</scope>
    <scope>GENETIC ANALYSIS</scope>
    <source>
        <strain>K12</strain>
    </source>
</reference>
<reference key="8">
    <citation type="unpublished observations" date="1995-07">
        <authorList>
            <person name="Rudd K.E."/>
        </authorList>
    </citation>
    <scope>IDENTIFICATION</scope>
</reference>
<reference key="9">
    <citation type="journal article" date="2010" name="Biochim. Biophys. Acta">
        <title>C-terminal domain of the Uup ATP-binding cassette ATPase is an essential folding domain that binds to DNA.</title>
        <authorList>
            <person name="Burgos Zepeda M.Y."/>
            <person name="Alessandri K."/>
            <person name="Murat D."/>
            <person name="El Amri C."/>
            <person name="Dassa E."/>
        </authorList>
    </citation>
    <scope>FUNCTION</scope>
    <scope>DOMAIN</scope>
    <scope>DISRUPTION PHENOTYPE</scope>
    <scope>DNA-BINDING</scope>
    <scope>MUTAGENESIS OF 551-LYS--GLY-635</scope>
</reference>
<reference key="10">
    <citation type="thesis" date="2015" institute="University of Michigan" country="United States">
        <title>Elucidating Ribosomes-Genetic Studies of the ATPase Uup and the Ribosomal Protein L1.</title>
        <authorList>
            <person name="Cochrane K.L."/>
        </authorList>
    </citation>
    <scope>FUNCTION IN RIBOSOME ASSEMBLY</scope>
    <scope>SUBCELLULAR LOCATION</scope>
    <scope>INDUCTION</scope>
    <scope>DISRUPTION PHENOTYPE</scope>
    <scope>MUTAGENESIS OF ASP-181; 294-GLU--GLU-300; ASP-465 AND 551-LYS--GLY-635</scope>
    <source>
        <strain>K12 / BW25113</strain>
    </source>
</reference>
<reference key="11">
    <citation type="journal article" date="2019" name="J. Mol. Biol.">
        <title>ABCF ATPases involved in protein synthesis, ribosome assembly and antibiotic resistance: structural and functional diversification across the tree of life.</title>
        <authorList>
            <person name="Murina V."/>
            <person name="Kasari M."/>
            <person name="Takada H."/>
            <person name="Hinnu M."/>
            <person name="Saha C.K."/>
            <person name="Grimshaw J.W."/>
            <person name="Seki T."/>
            <person name="Reith M."/>
            <person name="Putrins M."/>
            <person name="Tenson T."/>
            <person name="Strahl H."/>
            <person name="Hauryliuk V."/>
            <person name="Atkinson G.C."/>
        </authorList>
    </citation>
    <scope>FUNCTION IN TRANSLATION</scope>
    <scope>FAMILY</scope>
    <scope>MUTAGENESIS OF GLU-182 AND GLU-466</scope>
    <source>
        <strain>K12 / BW25113</strain>
    </source>
</reference>
<reference key="12">
    <citation type="journal article" date="2020" name="Nucleic Acids Res.">
        <title>Frequent template switching in postreplication gaps: suppression of deleterious consequences by the Escherichia coli Uup and RadD proteins.</title>
        <authorList>
            <person name="Romero Z.J."/>
            <person name="Armstrong T.J."/>
            <person name="Henrikus S.S."/>
            <person name="Chen S.H."/>
            <person name="Glass D.J."/>
            <person name="Ferrazzoli A.E."/>
            <person name="Wood E.A."/>
            <person name="Chitteni-Pattu S."/>
            <person name="van Oijen A.M."/>
            <person name="Lovett S.T."/>
            <person name="Robinson A."/>
            <person name="Cox M.M."/>
        </authorList>
    </citation>
    <scope>FUNCTION IN DNA REPAIR</scope>
    <scope>DISRUPTION PHENOTYPE</scope>
    <scope>DNA-BINDING</scope>
    <source>
        <strain>K12</strain>
    </source>
</reference>
<reference key="13">
    <citation type="journal article" date="2022" name="G3 (Bethesda)">
        <title>Identification of genetic interactions with priB links the PriA/PriB DNA replication restart pathway to double-strand DNA break repair in Escherichia coli.</title>
        <authorList>
            <person name="McKenzie A.M."/>
            <person name="Henry C."/>
            <person name="Myers K.S."/>
            <person name="Place M.M."/>
            <person name="Keck J.L."/>
        </authorList>
    </citation>
    <scope>GENETIC INTERACTION</scope>
    <scope>DISRUPTION PHENOTYPE</scope>
    <source>
        <strain>K12 / MG1655 / ATCC 47076</strain>
    </source>
</reference>
<reference evidence="15" key="14">
    <citation type="journal article" date="2012" name="J. Struct. Biol.">
        <title>The C-terminal domain of the Uup protein is a DNA-binding coiled coil motif.</title>
        <authorList>
            <person name="Carlier L."/>
            <person name="Haase A.S."/>
            <person name="Burgos Zepeda M.Y."/>
            <person name="Dassa E."/>
            <person name="Lequin O."/>
        </authorList>
    </citation>
    <scope>STRUCTURE BY NMR OF 528-635</scope>
    <scope>COILED COIL</scope>
    <source>
        <strain>K12</strain>
    </source>
</reference>
<name>UUP_ECOLI</name>
<feature type="chain" id="PRO_0000093029" description="ATP-binding protein Uup">
    <location>
        <begin position="1"/>
        <end position="635"/>
    </location>
</feature>
<feature type="domain" description="ABC transporter 1" evidence="1">
    <location>
        <begin position="1"/>
        <end position="253"/>
    </location>
</feature>
<feature type="domain" description="ABC transporter 2" evidence="1">
    <location>
        <begin position="320"/>
        <end position="546"/>
    </location>
</feature>
<feature type="region of interest" description="C-terminal domain (CTD), binds DNA, required to complement a deletion mutant" evidence="3">
    <location>
        <begin position="551"/>
        <end position="635"/>
    </location>
</feature>
<feature type="coiled-coil region" evidence="4 15">
    <location>
        <begin position="563"/>
        <end position="631"/>
    </location>
</feature>
<feature type="binding site" evidence="1">
    <location>
        <begin position="36"/>
        <end position="43"/>
    </location>
    <ligand>
        <name>ATP</name>
        <dbReference type="ChEBI" id="CHEBI:30616"/>
        <label>1</label>
    </ligand>
</feature>
<feature type="binding site" evidence="1">
    <location>
        <begin position="352"/>
        <end position="359"/>
    </location>
    <ligand>
        <name>ATP</name>
        <dbReference type="ChEBI" id="CHEBI:30616"/>
        <label>2</label>
    </ligand>
</feature>
<feature type="mutagenesis site" description="No longer hydrolyzes ATP, has a high level of transposon excision. No growth change at 37 or 18 degrees Celsius, not required to suppress bipA deletion." evidence="2 10">
    <original>D</original>
    <variation>N</variation>
    <location>
        <position position="181"/>
    </location>
</feature>
<feature type="mutagenesis site" description="Causes growth defect at 37 degrees Celsius, 6-fold decrease in translation; when associated with Q-464 (called EQ2)." evidence="5">
    <original>E</original>
    <variation>Q</variation>
    <location>
        <position position="182"/>
    </location>
</feature>
<feature type="mutagenesis site" description="Decreases growth at 18 degrees Celsius, does not suppress bipA deletion in cold, stronger association with ribosomes." evidence="10">
    <location>
        <begin position="294"/>
        <end position="300"/>
    </location>
</feature>
<feature type="mutagenesis site" description="No longer hydrolyzes ATP, has a high level of transposon excision. Inhibits growth at 37 and 18 degrees Celsius, does not suppress bipA deletion in cold, stronger association with ribosomes." evidence="2 10">
    <original>D</original>
    <variation>N</variation>
    <location>
        <position position="465"/>
    </location>
</feature>
<feature type="mutagenesis site" description="Causes growth defect at 37 degrees Celsius, 6-fold decrease in translation; when associated with Q-181 (EQ2)." evidence="5">
    <original>E</original>
    <variation>Q</variation>
    <location>
        <position position="466"/>
    </location>
</feature>
<feature type="mutagenesis site" description="Reduces DNA binding 2-fold, no change in ATP hydrolysis, has a high level of transposon excision. No growth change at 37 or 18 degrees Celsius, does not suppress bipA deletion in cold, stronger association with ribosomes." evidence="2 3 10">
    <location>
        <begin position="551"/>
        <end position="635"/>
    </location>
</feature>
<feature type="strand" evidence="16">
    <location>
        <begin position="556"/>
        <end position="559"/>
    </location>
</feature>
<feature type="helix" evidence="16">
    <location>
        <begin position="564"/>
        <end position="592"/>
    </location>
</feature>
<feature type="helix" evidence="16">
    <location>
        <begin position="596"/>
        <end position="598"/>
    </location>
</feature>
<feature type="helix" evidence="16">
    <location>
        <begin position="601"/>
        <end position="633"/>
    </location>
</feature>